<proteinExistence type="inferred from homology"/>
<protein>
    <recommendedName>
        <fullName evidence="1">ADP-L-glycero-D-manno-heptose-6-epimerase</fullName>
        <ecNumber evidence="1">5.1.3.20</ecNumber>
    </recommendedName>
    <alternativeName>
        <fullName evidence="1">ADP-L-glycero-beta-D-manno-heptose-6-epimerase</fullName>
        <shortName evidence="1">ADP-glyceromanno-heptose 6-epimerase</shortName>
        <shortName evidence="1">ADP-hep 6-epimerase</shortName>
        <shortName evidence="1">AGME</shortName>
    </alternativeName>
</protein>
<evidence type="ECO:0000255" key="1">
    <source>
        <dbReference type="HAMAP-Rule" id="MF_01601"/>
    </source>
</evidence>
<dbReference type="EC" id="5.1.3.20" evidence="1"/>
<dbReference type="EMBL" id="CP000644">
    <property type="protein sequence ID" value="ABO88292.1"/>
    <property type="molecule type" value="Genomic_DNA"/>
</dbReference>
<dbReference type="SMR" id="A4SHC0"/>
<dbReference type="STRING" id="29491.GCA_000820065_04147"/>
<dbReference type="KEGG" id="asa:ASA_0093"/>
<dbReference type="eggNOG" id="COG0451">
    <property type="taxonomic scope" value="Bacteria"/>
</dbReference>
<dbReference type="HOGENOM" id="CLU_007383_1_3_6"/>
<dbReference type="UniPathway" id="UPA00356">
    <property type="reaction ID" value="UER00440"/>
</dbReference>
<dbReference type="Proteomes" id="UP000000225">
    <property type="component" value="Chromosome"/>
</dbReference>
<dbReference type="GO" id="GO:0008712">
    <property type="term" value="F:ADP-glyceromanno-heptose 6-epimerase activity"/>
    <property type="evidence" value="ECO:0007669"/>
    <property type="project" value="UniProtKB-UniRule"/>
</dbReference>
<dbReference type="GO" id="GO:0050661">
    <property type="term" value="F:NADP binding"/>
    <property type="evidence" value="ECO:0007669"/>
    <property type="project" value="InterPro"/>
</dbReference>
<dbReference type="GO" id="GO:0097171">
    <property type="term" value="P:ADP-L-glycero-beta-D-manno-heptose biosynthetic process"/>
    <property type="evidence" value="ECO:0007669"/>
    <property type="project" value="UniProtKB-UniPathway"/>
</dbReference>
<dbReference type="GO" id="GO:0005975">
    <property type="term" value="P:carbohydrate metabolic process"/>
    <property type="evidence" value="ECO:0007669"/>
    <property type="project" value="UniProtKB-UniRule"/>
</dbReference>
<dbReference type="CDD" id="cd05248">
    <property type="entry name" value="ADP_GME_SDR_e"/>
    <property type="match status" value="1"/>
</dbReference>
<dbReference type="Gene3D" id="3.40.50.720">
    <property type="entry name" value="NAD(P)-binding Rossmann-like Domain"/>
    <property type="match status" value="1"/>
</dbReference>
<dbReference type="Gene3D" id="3.90.25.10">
    <property type="entry name" value="UDP-galactose 4-epimerase, domain 1"/>
    <property type="match status" value="1"/>
</dbReference>
<dbReference type="HAMAP" id="MF_01601">
    <property type="entry name" value="Heptose_epimerase"/>
    <property type="match status" value="1"/>
</dbReference>
<dbReference type="InterPro" id="IPR001509">
    <property type="entry name" value="Epimerase_deHydtase"/>
</dbReference>
<dbReference type="InterPro" id="IPR011912">
    <property type="entry name" value="Heptose_epim"/>
</dbReference>
<dbReference type="InterPro" id="IPR036291">
    <property type="entry name" value="NAD(P)-bd_dom_sf"/>
</dbReference>
<dbReference type="NCBIfam" id="TIGR02197">
    <property type="entry name" value="heptose_epim"/>
    <property type="match status" value="1"/>
</dbReference>
<dbReference type="NCBIfam" id="NF008360">
    <property type="entry name" value="PRK11150.1"/>
    <property type="match status" value="1"/>
</dbReference>
<dbReference type="PANTHER" id="PTHR43103:SF3">
    <property type="entry name" value="ADP-L-GLYCERO-D-MANNO-HEPTOSE-6-EPIMERASE"/>
    <property type="match status" value="1"/>
</dbReference>
<dbReference type="PANTHER" id="PTHR43103">
    <property type="entry name" value="NUCLEOSIDE-DIPHOSPHATE-SUGAR EPIMERASE"/>
    <property type="match status" value="1"/>
</dbReference>
<dbReference type="Pfam" id="PF01370">
    <property type="entry name" value="Epimerase"/>
    <property type="match status" value="1"/>
</dbReference>
<dbReference type="SUPFAM" id="SSF51735">
    <property type="entry name" value="NAD(P)-binding Rossmann-fold domains"/>
    <property type="match status" value="1"/>
</dbReference>
<sequence>MIVVTGGAGFIGSNLVKQLNAQGRTDIVVIDDLTDGTKFVNLVDLTIADYMDKDEFQARIVSGDEFEEWDDGIEVIFHEGACSATTEWNGKFIMEVNYEYSKDLFHYCIEREIPFIYASSAATYGGRNDNFIEDPKFEQPLNVYGYSKQLFDQYVRRWMPEINSQVVGLKYFNVYGPREQHKGSMASVAFHLNTQVKQGDNPKLFEGCDGFPDGGQMRDFIYVDDVCKVNLWFWQNPQHSGIFNCGTGRAEPFQNVAEAVIKHHQQGAIEYIPFPDHLKGRYQSFTQADMTRLRGVGYDGEFKTVAEGVADYMAWLNRA</sequence>
<accession>A4SHC0</accession>
<reference key="1">
    <citation type="journal article" date="2008" name="BMC Genomics">
        <title>The genome of Aeromonas salmonicida subsp. salmonicida A449: insights into the evolution of a fish pathogen.</title>
        <authorList>
            <person name="Reith M.E."/>
            <person name="Singh R.K."/>
            <person name="Curtis B."/>
            <person name="Boyd J.M."/>
            <person name="Bouevitch A."/>
            <person name="Kimball J."/>
            <person name="Munholland J."/>
            <person name="Murphy C."/>
            <person name="Sarty D."/>
            <person name="Williams J."/>
            <person name="Nash J.H."/>
            <person name="Johnson S.C."/>
            <person name="Brown L.L."/>
        </authorList>
    </citation>
    <scope>NUCLEOTIDE SEQUENCE [LARGE SCALE GENOMIC DNA]</scope>
    <source>
        <strain>A449</strain>
    </source>
</reference>
<name>HLDD_AERS4</name>
<gene>
    <name evidence="1" type="primary">hldD</name>
    <name type="ordered locus">ASA_0093</name>
</gene>
<feature type="chain" id="PRO_1000069340" description="ADP-L-glycero-D-manno-heptose-6-epimerase">
    <location>
        <begin position="1"/>
        <end position="319"/>
    </location>
</feature>
<feature type="active site" description="Proton acceptor" evidence="1">
    <location>
        <position position="144"/>
    </location>
</feature>
<feature type="active site" description="Proton acceptor" evidence="1">
    <location>
        <position position="182"/>
    </location>
</feature>
<feature type="binding site" evidence="1">
    <location>
        <begin position="10"/>
        <end position="11"/>
    </location>
    <ligand>
        <name>NADP(+)</name>
        <dbReference type="ChEBI" id="CHEBI:58349"/>
    </ligand>
</feature>
<feature type="binding site" evidence="1">
    <location>
        <begin position="31"/>
        <end position="32"/>
    </location>
    <ligand>
        <name>NADP(+)</name>
        <dbReference type="ChEBI" id="CHEBI:58349"/>
    </ligand>
</feature>
<feature type="binding site" evidence="1">
    <location>
        <position position="38"/>
    </location>
    <ligand>
        <name>NADP(+)</name>
        <dbReference type="ChEBI" id="CHEBI:58349"/>
    </ligand>
</feature>
<feature type="binding site" evidence="1">
    <location>
        <position position="53"/>
    </location>
    <ligand>
        <name>NADP(+)</name>
        <dbReference type="ChEBI" id="CHEBI:58349"/>
    </ligand>
</feature>
<feature type="binding site" evidence="1">
    <location>
        <begin position="79"/>
        <end position="83"/>
    </location>
    <ligand>
        <name>NADP(+)</name>
        <dbReference type="ChEBI" id="CHEBI:58349"/>
    </ligand>
</feature>
<feature type="binding site" evidence="1">
    <location>
        <position position="148"/>
    </location>
    <ligand>
        <name>NADP(+)</name>
        <dbReference type="ChEBI" id="CHEBI:58349"/>
    </ligand>
</feature>
<feature type="binding site" evidence="1">
    <location>
        <position position="173"/>
    </location>
    <ligand>
        <name>substrate</name>
    </ligand>
</feature>
<feature type="binding site" evidence="1">
    <location>
        <position position="174"/>
    </location>
    <ligand>
        <name>NADP(+)</name>
        <dbReference type="ChEBI" id="CHEBI:58349"/>
    </ligand>
</feature>
<feature type="binding site" evidence="1">
    <location>
        <position position="182"/>
    </location>
    <ligand>
        <name>NADP(+)</name>
        <dbReference type="ChEBI" id="CHEBI:58349"/>
    </ligand>
</feature>
<feature type="binding site" evidence="1">
    <location>
        <position position="184"/>
    </location>
    <ligand>
        <name>substrate</name>
    </ligand>
</feature>
<feature type="binding site" evidence="1">
    <location>
        <position position="191"/>
    </location>
    <ligand>
        <name>substrate</name>
    </ligand>
</feature>
<feature type="binding site" evidence="1">
    <location>
        <begin position="205"/>
        <end position="208"/>
    </location>
    <ligand>
        <name>substrate</name>
    </ligand>
</feature>
<feature type="binding site" evidence="1">
    <location>
        <position position="218"/>
    </location>
    <ligand>
        <name>substrate</name>
    </ligand>
</feature>
<feature type="binding site" evidence="1">
    <location>
        <position position="282"/>
    </location>
    <ligand>
        <name>substrate</name>
    </ligand>
</feature>
<comment type="function">
    <text evidence="1">Catalyzes the interconversion between ADP-D-glycero-beta-D-manno-heptose and ADP-L-glycero-beta-D-manno-heptose via an epimerization at carbon 6 of the heptose.</text>
</comment>
<comment type="catalytic activity">
    <reaction evidence="1">
        <text>ADP-D-glycero-beta-D-manno-heptose = ADP-L-glycero-beta-D-manno-heptose</text>
        <dbReference type="Rhea" id="RHEA:17577"/>
        <dbReference type="ChEBI" id="CHEBI:59967"/>
        <dbReference type="ChEBI" id="CHEBI:61506"/>
        <dbReference type="EC" id="5.1.3.20"/>
    </reaction>
</comment>
<comment type="cofactor">
    <cofactor evidence="1">
        <name>NADP(+)</name>
        <dbReference type="ChEBI" id="CHEBI:58349"/>
    </cofactor>
    <text evidence="1">Binds 1 NADP(+) per subunit.</text>
</comment>
<comment type="pathway">
    <text evidence="1">Nucleotide-sugar biosynthesis; ADP-L-glycero-beta-D-manno-heptose biosynthesis; ADP-L-glycero-beta-D-manno-heptose from D-glycero-beta-D-manno-heptose 7-phosphate: step 4/4.</text>
</comment>
<comment type="subunit">
    <text evidence="1">Homopentamer.</text>
</comment>
<comment type="domain">
    <text evidence="1">Contains a large N-terminal NADP-binding domain, and a smaller C-terminal substrate-binding domain.</text>
</comment>
<comment type="similarity">
    <text evidence="1">Belongs to the NAD(P)-dependent epimerase/dehydratase family. HldD subfamily.</text>
</comment>
<organism>
    <name type="scientific">Aeromonas salmonicida (strain A449)</name>
    <dbReference type="NCBI Taxonomy" id="382245"/>
    <lineage>
        <taxon>Bacteria</taxon>
        <taxon>Pseudomonadati</taxon>
        <taxon>Pseudomonadota</taxon>
        <taxon>Gammaproteobacteria</taxon>
        <taxon>Aeromonadales</taxon>
        <taxon>Aeromonadaceae</taxon>
        <taxon>Aeromonas</taxon>
    </lineage>
</organism>
<keyword id="KW-0119">Carbohydrate metabolism</keyword>
<keyword id="KW-0413">Isomerase</keyword>
<keyword id="KW-0521">NADP</keyword>